<accession>Q67JV4</accession>
<proteinExistence type="inferred from homology"/>
<gene>
    <name evidence="1" type="primary">rplX</name>
    <name type="ordered locus">STH3064</name>
</gene>
<name>RL24_SYMTH</name>
<organism>
    <name type="scientific">Symbiobacterium thermophilum (strain DSM 24528 / JCM 14929 / IAM 14863 / T)</name>
    <dbReference type="NCBI Taxonomy" id="292459"/>
    <lineage>
        <taxon>Bacteria</taxon>
        <taxon>Bacillati</taxon>
        <taxon>Bacillota</taxon>
        <taxon>Clostridia</taxon>
        <taxon>Eubacteriales</taxon>
        <taxon>Symbiobacteriaceae</taxon>
        <taxon>Symbiobacterium</taxon>
    </lineage>
</organism>
<evidence type="ECO:0000255" key="1">
    <source>
        <dbReference type="HAMAP-Rule" id="MF_01326"/>
    </source>
</evidence>
<evidence type="ECO:0000305" key="2"/>
<sequence>MHVKKDEIVVVITGKDKGKQGKVLRVLPKENRVVVEGVNVVKKHTKPSAKNPNGGIIEMEAPIHASNVMSLAKIEAKKAKKKG</sequence>
<feature type="chain" id="PRO_0000241671" description="Large ribosomal subunit protein uL24">
    <location>
        <begin position="1"/>
        <end position="83"/>
    </location>
</feature>
<keyword id="KW-1185">Reference proteome</keyword>
<keyword id="KW-0687">Ribonucleoprotein</keyword>
<keyword id="KW-0689">Ribosomal protein</keyword>
<keyword id="KW-0694">RNA-binding</keyword>
<keyword id="KW-0699">rRNA-binding</keyword>
<comment type="function">
    <text evidence="1">One of two assembly initiator proteins, it binds directly to the 5'-end of the 23S rRNA, where it nucleates assembly of the 50S subunit.</text>
</comment>
<comment type="function">
    <text evidence="1">One of the proteins that surrounds the polypeptide exit tunnel on the outside of the subunit.</text>
</comment>
<comment type="subunit">
    <text evidence="1">Part of the 50S ribosomal subunit.</text>
</comment>
<comment type="similarity">
    <text evidence="1">Belongs to the universal ribosomal protein uL24 family.</text>
</comment>
<reference key="1">
    <citation type="journal article" date="2004" name="Nucleic Acids Res.">
        <title>Genome sequence of Symbiobacterium thermophilum, an uncultivable bacterium that depends on microbial commensalism.</title>
        <authorList>
            <person name="Ueda K."/>
            <person name="Yamashita A."/>
            <person name="Ishikawa J."/>
            <person name="Shimada M."/>
            <person name="Watsuji T."/>
            <person name="Morimura K."/>
            <person name="Ikeda H."/>
            <person name="Hattori M."/>
            <person name="Beppu T."/>
        </authorList>
    </citation>
    <scope>NUCLEOTIDE SEQUENCE [LARGE SCALE GENOMIC DNA]</scope>
    <source>
        <strain>DSM 24528 / JCM 14929 / IAM 14863 / T</strain>
    </source>
</reference>
<protein>
    <recommendedName>
        <fullName evidence="1">Large ribosomal subunit protein uL24</fullName>
    </recommendedName>
    <alternativeName>
        <fullName evidence="2">50S ribosomal protein L24</fullName>
    </alternativeName>
</protein>
<dbReference type="EMBL" id="AP006840">
    <property type="protein sequence ID" value="BAD42046.1"/>
    <property type="molecule type" value="Genomic_DNA"/>
</dbReference>
<dbReference type="RefSeq" id="WP_011197179.1">
    <property type="nucleotide sequence ID" value="NC_006177.1"/>
</dbReference>
<dbReference type="SMR" id="Q67JV4"/>
<dbReference type="STRING" id="292459.STH3064"/>
<dbReference type="KEGG" id="sth:STH3064"/>
<dbReference type="eggNOG" id="COG0198">
    <property type="taxonomic scope" value="Bacteria"/>
</dbReference>
<dbReference type="HOGENOM" id="CLU_093315_3_0_9"/>
<dbReference type="Proteomes" id="UP000000417">
    <property type="component" value="Chromosome"/>
</dbReference>
<dbReference type="GO" id="GO:1990904">
    <property type="term" value="C:ribonucleoprotein complex"/>
    <property type="evidence" value="ECO:0007669"/>
    <property type="project" value="UniProtKB-KW"/>
</dbReference>
<dbReference type="GO" id="GO:0005840">
    <property type="term" value="C:ribosome"/>
    <property type="evidence" value="ECO:0007669"/>
    <property type="project" value="UniProtKB-KW"/>
</dbReference>
<dbReference type="GO" id="GO:0019843">
    <property type="term" value="F:rRNA binding"/>
    <property type="evidence" value="ECO:0007669"/>
    <property type="project" value="UniProtKB-UniRule"/>
</dbReference>
<dbReference type="GO" id="GO:0003735">
    <property type="term" value="F:structural constituent of ribosome"/>
    <property type="evidence" value="ECO:0007669"/>
    <property type="project" value="InterPro"/>
</dbReference>
<dbReference type="GO" id="GO:0006412">
    <property type="term" value="P:translation"/>
    <property type="evidence" value="ECO:0007669"/>
    <property type="project" value="UniProtKB-UniRule"/>
</dbReference>
<dbReference type="CDD" id="cd06089">
    <property type="entry name" value="KOW_RPL26"/>
    <property type="match status" value="1"/>
</dbReference>
<dbReference type="Gene3D" id="2.30.30.30">
    <property type="match status" value="1"/>
</dbReference>
<dbReference type="HAMAP" id="MF_01326_B">
    <property type="entry name" value="Ribosomal_uL24_B"/>
    <property type="match status" value="1"/>
</dbReference>
<dbReference type="InterPro" id="IPR005824">
    <property type="entry name" value="KOW"/>
</dbReference>
<dbReference type="InterPro" id="IPR014722">
    <property type="entry name" value="Rib_uL2_dom2"/>
</dbReference>
<dbReference type="InterPro" id="IPR003256">
    <property type="entry name" value="Ribosomal_uL24"/>
</dbReference>
<dbReference type="InterPro" id="IPR041988">
    <property type="entry name" value="Ribosomal_uL24_KOW"/>
</dbReference>
<dbReference type="InterPro" id="IPR008991">
    <property type="entry name" value="Translation_prot_SH3-like_sf"/>
</dbReference>
<dbReference type="NCBIfam" id="TIGR01079">
    <property type="entry name" value="rplX_bact"/>
    <property type="match status" value="1"/>
</dbReference>
<dbReference type="PANTHER" id="PTHR12903">
    <property type="entry name" value="MITOCHONDRIAL RIBOSOMAL PROTEIN L24"/>
    <property type="match status" value="1"/>
</dbReference>
<dbReference type="Pfam" id="PF00467">
    <property type="entry name" value="KOW"/>
    <property type="match status" value="1"/>
</dbReference>
<dbReference type="Pfam" id="PF17136">
    <property type="entry name" value="ribosomal_L24"/>
    <property type="match status" value="1"/>
</dbReference>
<dbReference type="SMART" id="SM00739">
    <property type="entry name" value="KOW"/>
    <property type="match status" value="1"/>
</dbReference>
<dbReference type="SUPFAM" id="SSF50104">
    <property type="entry name" value="Translation proteins SH3-like domain"/>
    <property type="match status" value="1"/>
</dbReference>